<evidence type="ECO:0000255" key="1">
    <source>
        <dbReference type="HAMAP-Rule" id="MF_00683"/>
    </source>
</evidence>
<accession>P57621</accession>
<proteinExistence type="inferred from homology"/>
<organism>
    <name type="scientific">Buchnera aphidicola subsp. Acyrthosiphon pisum (strain APS)</name>
    <name type="common">Acyrthosiphon pisum symbiotic bacterium</name>
    <dbReference type="NCBI Taxonomy" id="107806"/>
    <lineage>
        <taxon>Bacteria</taxon>
        <taxon>Pseudomonadati</taxon>
        <taxon>Pseudomonadota</taxon>
        <taxon>Gammaproteobacteria</taxon>
        <taxon>Enterobacterales</taxon>
        <taxon>Erwiniaceae</taxon>
        <taxon>Buchnera</taxon>
    </lineage>
</organism>
<name>TMAR_BUCAI</name>
<keyword id="KW-0175">Coiled coil</keyword>
<keyword id="KW-0963">Cytoplasm</keyword>
<keyword id="KW-1185">Reference proteome</keyword>
<dbReference type="EMBL" id="BA000003">
    <property type="protein sequence ID" value="BAB13248.1"/>
    <property type="molecule type" value="Genomic_DNA"/>
</dbReference>
<dbReference type="RefSeq" id="NP_240362.1">
    <property type="nucleotide sequence ID" value="NC_002528.1"/>
</dbReference>
<dbReference type="RefSeq" id="WP_009874506.1">
    <property type="nucleotide sequence ID" value="NZ_AP036055.1"/>
</dbReference>
<dbReference type="SMR" id="P57621"/>
<dbReference type="STRING" id="563178.BUAP5A_549"/>
<dbReference type="EnsemblBacteria" id="BAB13248">
    <property type="protein sequence ID" value="BAB13248"/>
    <property type="gene ID" value="BAB13248"/>
</dbReference>
<dbReference type="KEGG" id="buc:BU556"/>
<dbReference type="PATRIC" id="fig|107806.10.peg.561"/>
<dbReference type="eggNOG" id="COG2926">
    <property type="taxonomic scope" value="Bacteria"/>
</dbReference>
<dbReference type="HOGENOM" id="CLU_153146_0_0_6"/>
<dbReference type="BioCyc" id="BAPH107806:GBZJ-549-MONOMER"/>
<dbReference type="Proteomes" id="UP000001806">
    <property type="component" value="Chromosome"/>
</dbReference>
<dbReference type="GO" id="GO:0005829">
    <property type="term" value="C:cytosol"/>
    <property type="evidence" value="ECO:0007669"/>
    <property type="project" value="TreeGrafter"/>
</dbReference>
<dbReference type="HAMAP" id="MF_00683">
    <property type="entry name" value="Pole_loc_TmaR"/>
    <property type="match status" value="1"/>
</dbReference>
<dbReference type="InterPro" id="IPR007458">
    <property type="entry name" value="DUF496"/>
</dbReference>
<dbReference type="NCBIfam" id="NF003844">
    <property type="entry name" value="PRK05423.1"/>
    <property type="match status" value="1"/>
</dbReference>
<dbReference type="PANTHER" id="PTHR39591">
    <property type="entry name" value="UPF0265 PROTEIN YEEX"/>
    <property type="match status" value="1"/>
</dbReference>
<dbReference type="PANTHER" id="PTHR39591:SF1">
    <property type="entry name" value="UPF0265 PROTEIN YEEX"/>
    <property type="match status" value="1"/>
</dbReference>
<dbReference type="Pfam" id="PF04363">
    <property type="entry name" value="DUF496"/>
    <property type="match status" value="1"/>
</dbReference>
<dbReference type="PIRSF" id="PIRSF028773">
    <property type="entry name" value="UCP028773"/>
    <property type="match status" value="1"/>
</dbReference>
<reference key="1">
    <citation type="journal article" date="2000" name="Nature">
        <title>Genome sequence of the endocellular bacterial symbiont of aphids Buchnera sp. APS.</title>
        <authorList>
            <person name="Shigenobu S."/>
            <person name="Watanabe H."/>
            <person name="Hattori M."/>
            <person name="Sakaki Y."/>
            <person name="Ishikawa H."/>
        </authorList>
    </citation>
    <scope>NUCLEOTIDE SEQUENCE [LARGE SCALE GENOMIC DNA]</scope>
    <source>
        <strain>APS</strain>
    </source>
</reference>
<gene>
    <name evidence="1" type="primary">tmaR</name>
    <name type="ordered locus">BU556</name>
</gene>
<comment type="function">
    <text evidence="1">Pole-localizer protein involved in the regulation of several cellular processes.</text>
</comment>
<comment type="subcellular location">
    <subcellularLocation>
        <location evidence="1">Cytoplasm</location>
    </subcellularLocation>
</comment>
<comment type="similarity">
    <text evidence="1">Belongs to the pole-localizer TmaR family.</text>
</comment>
<sequence length="102" mass="12546">MSDTKKSFKNVLEFVHKFRRKNKIKREISDIEKKIRDNQKRILLLDNLIQYITLDMNYEEIKKIIFMMKSDYEDRIDDYIVKNAELSKEKRNLSKELKFIIK</sequence>
<protein>
    <recommendedName>
        <fullName evidence="1">Pole-localizer protein TmaR</fullName>
    </recommendedName>
</protein>
<feature type="chain" id="PRO_0000072755" description="Pole-localizer protein TmaR">
    <location>
        <begin position="1"/>
        <end position="102"/>
    </location>
</feature>
<feature type="coiled-coil region" evidence="1">
    <location>
        <begin position="69"/>
        <end position="96"/>
    </location>
</feature>